<organism>
    <name type="scientific">Kocuria rhizophila (strain ATCC 9341 / DSM 348 / NBRC 103217 / DC2201)</name>
    <dbReference type="NCBI Taxonomy" id="378753"/>
    <lineage>
        <taxon>Bacteria</taxon>
        <taxon>Bacillati</taxon>
        <taxon>Actinomycetota</taxon>
        <taxon>Actinomycetes</taxon>
        <taxon>Micrococcales</taxon>
        <taxon>Micrococcaceae</taxon>
        <taxon>Kocuria</taxon>
    </lineage>
</organism>
<proteinExistence type="inferred from homology"/>
<reference key="1">
    <citation type="journal article" date="2008" name="J. Bacteriol.">
        <title>Complete genome sequence of the soil actinomycete Kocuria rhizophila.</title>
        <authorList>
            <person name="Takarada H."/>
            <person name="Sekine M."/>
            <person name="Kosugi H."/>
            <person name="Matsuo Y."/>
            <person name="Fujisawa T."/>
            <person name="Omata S."/>
            <person name="Kishi E."/>
            <person name="Shimizu A."/>
            <person name="Tsukatani N."/>
            <person name="Tanikawa S."/>
            <person name="Fujita N."/>
            <person name="Harayama S."/>
        </authorList>
    </citation>
    <scope>NUCLEOTIDE SEQUENCE [LARGE SCALE GENOMIC DNA]</scope>
    <source>
        <strain>ATCC 9341 / DSM 348 / NBRC 103217 / DC2201</strain>
    </source>
</reference>
<name>OBG_KOCRD</name>
<feature type="chain" id="PRO_0000385988" description="GTPase Obg">
    <location>
        <begin position="1"/>
        <end position="531"/>
    </location>
</feature>
<feature type="domain" description="Obg" evidence="3">
    <location>
        <begin position="2"/>
        <end position="159"/>
    </location>
</feature>
<feature type="domain" description="OBG-type G" evidence="1">
    <location>
        <begin position="160"/>
        <end position="341"/>
    </location>
</feature>
<feature type="domain" description="OCT" evidence="2">
    <location>
        <begin position="368"/>
        <end position="453"/>
    </location>
</feature>
<feature type="region of interest" description="Disordered" evidence="4">
    <location>
        <begin position="346"/>
        <end position="365"/>
    </location>
</feature>
<feature type="region of interest" description="Disordered" evidence="4">
    <location>
        <begin position="459"/>
        <end position="531"/>
    </location>
</feature>
<feature type="compositionally biased region" description="Basic and acidic residues" evidence="4">
    <location>
        <begin position="468"/>
        <end position="507"/>
    </location>
</feature>
<feature type="compositionally biased region" description="Basic and acidic residues" evidence="4">
    <location>
        <begin position="514"/>
        <end position="531"/>
    </location>
</feature>
<feature type="binding site" evidence="1">
    <location>
        <begin position="166"/>
        <end position="173"/>
    </location>
    <ligand>
        <name>GTP</name>
        <dbReference type="ChEBI" id="CHEBI:37565"/>
    </ligand>
</feature>
<feature type="binding site" evidence="1">
    <location>
        <position position="173"/>
    </location>
    <ligand>
        <name>Mg(2+)</name>
        <dbReference type="ChEBI" id="CHEBI:18420"/>
    </ligand>
</feature>
<feature type="binding site" evidence="1">
    <location>
        <begin position="191"/>
        <end position="195"/>
    </location>
    <ligand>
        <name>GTP</name>
        <dbReference type="ChEBI" id="CHEBI:37565"/>
    </ligand>
</feature>
<feature type="binding site" evidence="1">
    <location>
        <position position="193"/>
    </location>
    <ligand>
        <name>Mg(2+)</name>
        <dbReference type="ChEBI" id="CHEBI:18420"/>
    </ligand>
</feature>
<feature type="binding site" evidence="1">
    <location>
        <begin position="212"/>
        <end position="215"/>
    </location>
    <ligand>
        <name>GTP</name>
        <dbReference type="ChEBI" id="CHEBI:37565"/>
    </ligand>
</feature>
<feature type="binding site" evidence="1">
    <location>
        <begin position="293"/>
        <end position="296"/>
    </location>
    <ligand>
        <name>GTP</name>
        <dbReference type="ChEBI" id="CHEBI:37565"/>
    </ligand>
</feature>
<feature type="binding site" evidence="1">
    <location>
        <begin position="322"/>
        <end position="324"/>
    </location>
    <ligand>
        <name>GTP</name>
        <dbReference type="ChEBI" id="CHEBI:37565"/>
    </ligand>
</feature>
<comment type="function">
    <text evidence="1">An essential GTPase which binds GTP, GDP and possibly (p)ppGpp with moderate affinity, with high nucleotide exchange rates and a fairly low GTP hydrolysis rate. Plays a role in control of the cell cycle, stress response, ribosome biogenesis and in those bacteria that undergo differentiation, in morphogenesis control.</text>
</comment>
<comment type="cofactor">
    <cofactor evidence="1">
        <name>Mg(2+)</name>
        <dbReference type="ChEBI" id="CHEBI:18420"/>
    </cofactor>
</comment>
<comment type="subunit">
    <text evidence="1">Monomer.</text>
</comment>
<comment type="subcellular location">
    <subcellularLocation>
        <location evidence="1">Cytoplasm</location>
    </subcellularLocation>
</comment>
<comment type="similarity">
    <text evidence="1">Belongs to the TRAFAC class OBG-HflX-like GTPase superfamily. OBG GTPase family.</text>
</comment>
<sequence length="531" mass="57842">MASFVDRVIVHATGGNGGHGCVSVKREKFKPLGGPDGGNGGDGGSVILRVDGQSTTLLGFHHAPHQKAPNGEPGKGDMRHGFKGQDLVLSVPDGTVVKDREGNVLADLLGEGSEYVLAAGGQGGRGNAALASPKRKAPGFALLGTPGEEQEVELELKSIADIALVGFPSAGKSSLIAAMSAARPKIADYPFTTLVPNLGVVQAGDTRFTVADVPGLIPGASEGKGLGLEFLRHVERCAALVHVIDCATLEPGRDPLTDLDALEEELAHYAQDIADEDPSSIPLTQRPRLVVLNKVDVPEARELADFVRVELEQRGYPVFEISTASHEGLRELSFAMAALVSEARAQEEQREQQRQTVPVLQPEPVRRRRGRDRREFVITREDRAEEPLYHVRGEKPERWVLQTDFNNDEAVGYLADRFAKLGIEDELFRIGAKPGNAVLIGPEENGVVFDWEPTMVGGAELLGGPRGSDLRLEETSRPTRREKREQFYDRMDAKSEARAELEQERRAGVWTESVDARDRRRTSETKETNEK</sequence>
<evidence type="ECO:0000255" key="1">
    <source>
        <dbReference type="HAMAP-Rule" id="MF_01454"/>
    </source>
</evidence>
<evidence type="ECO:0000255" key="2">
    <source>
        <dbReference type="PROSITE-ProRule" id="PRU01229"/>
    </source>
</evidence>
<evidence type="ECO:0000255" key="3">
    <source>
        <dbReference type="PROSITE-ProRule" id="PRU01231"/>
    </source>
</evidence>
<evidence type="ECO:0000256" key="4">
    <source>
        <dbReference type="SAM" id="MobiDB-lite"/>
    </source>
</evidence>
<dbReference type="EC" id="3.6.5.-" evidence="1"/>
<dbReference type="EMBL" id="AP009152">
    <property type="protein sequence ID" value="BAG29479.1"/>
    <property type="molecule type" value="Genomic_DNA"/>
</dbReference>
<dbReference type="RefSeq" id="WP_012398200.1">
    <property type="nucleotide sequence ID" value="NC_010617.1"/>
</dbReference>
<dbReference type="SMR" id="B2GGD9"/>
<dbReference type="STRING" id="378753.KRH_11320"/>
<dbReference type="KEGG" id="krh:KRH_11320"/>
<dbReference type="eggNOG" id="COG0536">
    <property type="taxonomic scope" value="Bacteria"/>
</dbReference>
<dbReference type="HOGENOM" id="CLU_011747_1_1_11"/>
<dbReference type="OrthoDB" id="9807318at2"/>
<dbReference type="Proteomes" id="UP000008838">
    <property type="component" value="Chromosome"/>
</dbReference>
<dbReference type="GO" id="GO:0005737">
    <property type="term" value="C:cytoplasm"/>
    <property type="evidence" value="ECO:0007669"/>
    <property type="project" value="UniProtKB-SubCell"/>
</dbReference>
<dbReference type="GO" id="GO:0005525">
    <property type="term" value="F:GTP binding"/>
    <property type="evidence" value="ECO:0007669"/>
    <property type="project" value="UniProtKB-UniRule"/>
</dbReference>
<dbReference type="GO" id="GO:0003924">
    <property type="term" value="F:GTPase activity"/>
    <property type="evidence" value="ECO:0007669"/>
    <property type="project" value="UniProtKB-UniRule"/>
</dbReference>
<dbReference type="GO" id="GO:0000287">
    <property type="term" value="F:magnesium ion binding"/>
    <property type="evidence" value="ECO:0007669"/>
    <property type="project" value="InterPro"/>
</dbReference>
<dbReference type="GO" id="GO:0042254">
    <property type="term" value="P:ribosome biogenesis"/>
    <property type="evidence" value="ECO:0007669"/>
    <property type="project" value="UniProtKB-UniRule"/>
</dbReference>
<dbReference type="CDD" id="cd01898">
    <property type="entry name" value="Obg"/>
    <property type="match status" value="1"/>
</dbReference>
<dbReference type="FunFam" id="2.70.210.12:FF:000001">
    <property type="entry name" value="GTPase Obg"/>
    <property type="match status" value="1"/>
</dbReference>
<dbReference type="Gene3D" id="3.30.300.350">
    <property type="entry name" value="GTP-binding protein OBG, C-terminal domain"/>
    <property type="match status" value="1"/>
</dbReference>
<dbReference type="Gene3D" id="2.70.210.12">
    <property type="entry name" value="GTP1/OBG domain"/>
    <property type="match status" value="1"/>
</dbReference>
<dbReference type="Gene3D" id="3.40.50.300">
    <property type="entry name" value="P-loop containing nucleotide triphosphate hydrolases"/>
    <property type="match status" value="1"/>
</dbReference>
<dbReference type="HAMAP" id="MF_01454">
    <property type="entry name" value="GTPase_Obg"/>
    <property type="match status" value="1"/>
</dbReference>
<dbReference type="InterPro" id="IPR031167">
    <property type="entry name" value="G_OBG"/>
</dbReference>
<dbReference type="InterPro" id="IPR006073">
    <property type="entry name" value="GTP-bd"/>
</dbReference>
<dbReference type="InterPro" id="IPR014100">
    <property type="entry name" value="GTP-bd_Obg/CgtA"/>
</dbReference>
<dbReference type="InterPro" id="IPR036346">
    <property type="entry name" value="GTP-bd_prot_GTP1/OBG_C_sf"/>
</dbReference>
<dbReference type="InterPro" id="IPR006074">
    <property type="entry name" value="GTP1-OBG_CS"/>
</dbReference>
<dbReference type="InterPro" id="IPR006169">
    <property type="entry name" value="GTP1_OBG_dom"/>
</dbReference>
<dbReference type="InterPro" id="IPR036726">
    <property type="entry name" value="GTP1_OBG_dom_sf"/>
</dbReference>
<dbReference type="InterPro" id="IPR045086">
    <property type="entry name" value="OBG_GTPase"/>
</dbReference>
<dbReference type="InterPro" id="IPR015349">
    <property type="entry name" value="OCT_dom"/>
</dbReference>
<dbReference type="InterPro" id="IPR027417">
    <property type="entry name" value="P-loop_NTPase"/>
</dbReference>
<dbReference type="NCBIfam" id="TIGR02729">
    <property type="entry name" value="Obg_CgtA"/>
    <property type="match status" value="1"/>
</dbReference>
<dbReference type="NCBIfam" id="TIGR03595">
    <property type="entry name" value="Obg_CgtA_exten"/>
    <property type="match status" value="1"/>
</dbReference>
<dbReference type="NCBIfam" id="NF008954">
    <property type="entry name" value="PRK12296.1"/>
    <property type="match status" value="1"/>
</dbReference>
<dbReference type="NCBIfam" id="NF008955">
    <property type="entry name" value="PRK12297.1"/>
    <property type="match status" value="1"/>
</dbReference>
<dbReference type="NCBIfam" id="NF008956">
    <property type="entry name" value="PRK12299.1"/>
    <property type="match status" value="1"/>
</dbReference>
<dbReference type="PANTHER" id="PTHR11702">
    <property type="entry name" value="DEVELOPMENTALLY REGULATED GTP-BINDING PROTEIN-RELATED"/>
    <property type="match status" value="1"/>
</dbReference>
<dbReference type="PANTHER" id="PTHR11702:SF31">
    <property type="entry name" value="MITOCHONDRIAL RIBOSOME-ASSOCIATED GTPASE 2"/>
    <property type="match status" value="1"/>
</dbReference>
<dbReference type="Pfam" id="PF09269">
    <property type="entry name" value="DUF1967"/>
    <property type="match status" value="1"/>
</dbReference>
<dbReference type="Pfam" id="PF01018">
    <property type="entry name" value="GTP1_OBG"/>
    <property type="match status" value="1"/>
</dbReference>
<dbReference type="Pfam" id="PF01926">
    <property type="entry name" value="MMR_HSR1"/>
    <property type="match status" value="1"/>
</dbReference>
<dbReference type="PRINTS" id="PR00326">
    <property type="entry name" value="GTP1OBG"/>
</dbReference>
<dbReference type="SUPFAM" id="SSF102741">
    <property type="entry name" value="Obg GTP-binding protein C-terminal domain"/>
    <property type="match status" value="1"/>
</dbReference>
<dbReference type="SUPFAM" id="SSF82051">
    <property type="entry name" value="Obg GTP-binding protein N-terminal domain"/>
    <property type="match status" value="1"/>
</dbReference>
<dbReference type="SUPFAM" id="SSF52540">
    <property type="entry name" value="P-loop containing nucleoside triphosphate hydrolases"/>
    <property type="match status" value="1"/>
</dbReference>
<dbReference type="PROSITE" id="PS51710">
    <property type="entry name" value="G_OBG"/>
    <property type="match status" value="1"/>
</dbReference>
<dbReference type="PROSITE" id="PS00905">
    <property type="entry name" value="GTP1_OBG"/>
    <property type="match status" value="1"/>
</dbReference>
<dbReference type="PROSITE" id="PS51883">
    <property type="entry name" value="OBG"/>
    <property type="match status" value="1"/>
</dbReference>
<dbReference type="PROSITE" id="PS51881">
    <property type="entry name" value="OCT"/>
    <property type="match status" value="1"/>
</dbReference>
<accession>B2GGD9</accession>
<keyword id="KW-0963">Cytoplasm</keyword>
<keyword id="KW-0342">GTP-binding</keyword>
<keyword id="KW-0378">Hydrolase</keyword>
<keyword id="KW-0460">Magnesium</keyword>
<keyword id="KW-0479">Metal-binding</keyword>
<keyword id="KW-0547">Nucleotide-binding</keyword>
<keyword id="KW-1185">Reference proteome</keyword>
<gene>
    <name evidence="1" type="primary">obg</name>
    <name type="ordered locus">KRH_11320</name>
</gene>
<protein>
    <recommendedName>
        <fullName evidence="1">GTPase Obg</fullName>
        <ecNumber evidence="1">3.6.5.-</ecNumber>
    </recommendedName>
    <alternativeName>
        <fullName evidence="1">GTP-binding protein Obg</fullName>
    </alternativeName>
</protein>